<proteinExistence type="inferred from homology"/>
<feature type="chain" id="PRO_1000144971" description="Protein translocase subunit SecA">
    <location>
        <begin position="1"/>
        <end position="902"/>
    </location>
</feature>
<feature type="region of interest" description="Disordered" evidence="2">
    <location>
        <begin position="565"/>
        <end position="584"/>
    </location>
</feature>
<feature type="region of interest" description="Disordered" evidence="2">
    <location>
        <begin position="840"/>
        <end position="902"/>
    </location>
</feature>
<feature type="compositionally biased region" description="Basic and acidic residues" evidence="2">
    <location>
        <begin position="840"/>
        <end position="859"/>
    </location>
</feature>
<feature type="compositionally biased region" description="Basic and acidic residues" evidence="2">
    <location>
        <begin position="873"/>
        <end position="882"/>
    </location>
</feature>
<feature type="compositionally biased region" description="Basic residues" evidence="2">
    <location>
        <begin position="892"/>
        <end position="902"/>
    </location>
</feature>
<feature type="binding site" evidence="1">
    <location>
        <position position="87"/>
    </location>
    <ligand>
        <name>ATP</name>
        <dbReference type="ChEBI" id="CHEBI:30616"/>
    </ligand>
</feature>
<feature type="binding site" evidence="1">
    <location>
        <begin position="105"/>
        <end position="109"/>
    </location>
    <ligand>
        <name>ATP</name>
        <dbReference type="ChEBI" id="CHEBI:30616"/>
    </ligand>
</feature>
<feature type="binding site" evidence="1">
    <location>
        <position position="512"/>
    </location>
    <ligand>
        <name>ATP</name>
        <dbReference type="ChEBI" id="CHEBI:30616"/>
    </ligand>
</feature>
<feature type="binding site" evidence="1">
    <location>
        <position position="886"/>
    </location>
    <ligand>
        <name>Zn(2+)</name>
        <dbReference type="ChEBI" id="CHEBI:29105"/>
    </ligand>
</feature>
<feature type="binding site" evidence="1">
    <location>
        <position position="888"/>
    </location>
    <ligand>
        <name>Zn(2+)</name>
        <dbReference type="ChEBI" id="CHEBI:29105"/>
    </ligand>
</feature>
<feature type="binding site" evidence="1">
    <location>
        <position position="897"/>
    </location>
    <ligand>
        <name>Zn(2+)</name>
        <dbReference type="ChEBI" id="CHEBI:29105"/>
    </ligand>
</feature>
<feature type="binding site" evidence="1">
    <location>
        <position position="898"/>
    </location>
    <ligand>
        <name>Zn(2+)</name>
        <dbReference type="ChEBI" id="CHEBI:29105"/>
    </ligand>
</feature>
<name>SECA_ALTMD</name>
<evidence type="ECO:0000255" key="1">
    <source>
        <dbReference type="HAMAP-Rule" id="MF_01382"/>
    </source>
</evidence>
<evidence type="ECO:0000256" key="2">
    <source>
        <dbReference type="SAM" id="MobiDB-lite"/>
    </source>
</evidence>
<organism>
    <name type="scientific">Alteromonas mediterranea (strain DSM 17117 / CIP 110805 / LMG 28347 / Deep ecotype)</name>
    <dbReference type="NCBI Taxonomy" id="1774373"/>
    <lineage>
        <taxon>Bacteria</taxon>
        <taxon>Pseudomonadati</taxon>
        <taxon>Pseudomonadota</taxon>
        <taxon>Gammaproteobacteria</taxon>
        <taxon>Alteromonadales</taxon>
        <taxon>Alteromonadaceae</taxon>
        <taxon>Alteromonas/Salinimonas group</taxon>
        <taxon>Alteromonas</taxon>
    </lineage>
</organism>
<comment type="function">
    <text evidence="1">Part of the Sec protein translocase complex. Interacts with the SecYEG preprotein conducting channel. Has a central role in coupling the hydrolysis of ATP to the transfer of proteins into and across the cell membrane, serving both as a receptor for the preprotein-SecB complex and as an ATP-driven molecular motor driving the stepwise translocation of polypeptide chains across the membrane.</text>
</comment>
<comment type="catalytic activity">
    <reaction evidence="1">
        <text>ATP + H2O + cellular proteinSide 1 = ADP + phosphate + cellular proteinSide 2.</text>
        <dbReference type="EC" id="7.4.2.8"/>
    </reaction>
</comment>
<comment type="cofactor">
    <cofactor evidence="1">
        <name>Zn(2+)</name>
        <dbReference type="ChEBI" id="CHEBI:29105"/>
    </cofactor>
    <text evidence="1">May bind 1 zinc ion per subunit.</text>
</comment>
<comment type="subunit">
    <text evidence="1">Monomer and homodimer. Part of the essential Sec protein translocation apparatus which comprises SecA, SecYEG and auxiliary proteins SecDF-YajC and YidC.</text>
</comment>
<comment type="subcellular location">
    <subcellularLocation>
        <location evidence="1">Cell inner membrane</location>
        <topology evidence="1">Peripheral membrane protein</topology>
        <orientation evidence="1">Cytoplasmic side</orientation>
    </subcellularLocation>
    <subcellularLocation>
        <location evidence="1">Cytoplasm</location>
    </subcellularLocation>
    <text evidence="1">Distribution is 50-50.</text>
</comment>
<comment type="similarity">
    <text evidence="1">Belongs to the SecA family.</text>
</comment>
<protein>
    <recommendedName>
        <fullName evidence="1">Protein translocase subunit SecA</fullName>
        <ecNumber evidence="1">7.4.2.8</ecNumber>
    </recommendedName>
</protein>
<dbReference type="EC" id="7.4.2.8" evidence="1"/>
<dbReference type="EMBL" id="CP001103">
    <property type="protein sequence ID" value="AEA99156.1"/>
    <property type="molecule type" value="Genomic_DNA"/>
</dbReference>
<dbReference type="RefSeq" id="WP_012519448.1">
    <property type="nucleotide sequence ID" value="NC_011138.3"/>
</dbReference>
<dbReference type="SMR" id="B4RWX1"/>
<dbReference type="KEGG" id="amc:MADE_1015110"/>
<dbReference type="HOGENOM" id="CLU_005314_3_0_6"/>
<dbReference type="Proteomes" id="UP000001870">
    <property type="component" value="Chromosome"/>
</dbReference>
<dbReference type="GO" id="GO:0031522">
    <property type="term" value="C:cell envelope Sec protein transport complex"/>
    <property type="evidence" value="ECO:0007669"/>
    <property type="project" value="TreeGrafter"/>
</dbReference>
<dbReference type="GO" id="GO:0005829">
    <property type="term" value="C:cytosol"/>
    <property type="evidence" value="ECO:0007669"/>
    <property type="project" value="TreeGrafter"/>
</dbReference>
<dbReference type="GO" id="GO:0005886">
    <property type="term" value="C:plasma membrane"/>
    <property type="evidence" value="ECO:0007669"/>
    <property type="project" value="UniProtKB-SubCell"/>
</dbReference>
<dbReference type="GO" id="GO:0005524">
    <property type="term" value="F:ATP binding"/>
    <property type="evidence" value="ECO:0007669"/>
    <property type="project" value="UniProtKB-UniRule"/>
</dbReference>
<dbReference type="GO" id="GO:0046872">
    <property type="term" value="F:metal ion binding"/>
    <property type="evidence" value="ECO:0007669"/>
    <property type="project" value="UniProtKB-KW"/>
</dbReference>
<dbReference type="GO" id="GO:0008564">
    <property type="term" value="F:protein-exporting ATPase activity"/>
    <property type="evidence" value="ECO:0007669"/>
    <property type="project" value="UniProtKB-EC"/>
</dbReference>
<dbReference type="GO" id="GO:0065002">
    <property type="term" value="P:intracellular protein transmembrane transport"/>
    <property type="evidence" value="ECO:0007669"/>
    <property type="project" value="UniProtKB-UniRule"/>
</dbReference>
<dbReference type="GO" id="GO:0017038">
    <property type="term" value="P:protein import"/>
    <property type="evidence" value="ECO:0007669"/>
    <property type="project" value="InterPro"/>
</dbReference>
<dbReference type="GO" id="GO:0006605">
    <property type="term" value="P:protein targeting"/>
    <property type="evidence" value="ECO:0007669"/>
    <property type="project" value="UniProtKB-UniRule"/>
</dbReference>
<dbReference type="GO" id="GO:0043952">
    <property type="term" value="P:protein transport by the Sec complex"/>
    <property type="evidence" value="ECO:0007669"/>
    <property type="project" value="TreeGrafter"/>
</dbReference>
<dbReference type="CDD" id="cd17928">
    <property type="entry name" value="DEXDc_SecA"/>
    <property type="match status" value="1"/>
</dbReference>
<dbReference type="CDD" id="cd18803">
    <property type="entry name" value="SF2_C_secA"/>
    <property type="match status" value="1"/>
</dbReference>
<dbReference type="FunFam" id="1.10.3060.10:FF:000001">
    <property type="entry name" value="Preprotein translocase subunit SecA"/>
    <property type="match status" value="1"/>
</dbReference>
<dbReference type="FunFam" id="3.40.50.300:FF:000081">
    <property type="entry name" value="Preprotein translocase subunit SecA"/>
    <property type="match status" value="1"/>
</dbReference>
<dbReference type="FunFam" id="3.40.50.300:FF:000113">
    <property type="entry name" value="Preprotein translocase subunit SecA"/>
    <property type="match status" value="1"/>
</dbReference>
<dbReference type="FunFam" id="3.90.1440.10:FF:000001">
    <property type="entry name" value="Preprotein translocase subunit SecA"/>
    <property type="match status" value="1"/>
</dbReference>
<dbReference type="Gene3D" id="1.10.3060.10">
    <property type="entry name" value="Helical scaffold and wing domains of SecA"/>
    <property type="match status" value="1"/>
</dbReference>
<dbReference type="Gene3D" id="3.40.50.300">
    <property type="entry name" value="P-loop containing nucleotide triphosphate hydrolases"/>
    <property type="match status" value="2"/>
</dbReference>
<dbReference type="Gene3D" id="3.90.1440.10">
    <property type="entry name" value="SecA, preprotein cross-linking domain"/>
    <property type="match status" value="1"/>
</dbReference>
<dbReference type="HAMAP" id="MF_01382">
    <property type="entry name" value="SecA"/>
    <property type="match status" value="1"/>
</dbReference>
<dbReference type="InterPro" id="IPR014001">
    <property type="entry name" value="Helicase_ATP-bd"/>
</dbReference>
<dbReference type="InterPro" id="IPR027417">
    <property type="entry name" value="P-loop_NTPase"/>
</dbReference>
<dbReference type="InterPro" id="IPR004027">
    <property type="entry name" value="SEC_C_motif"/>
</dbReference>
<dbReference type="InterPro" id="IPR000185">
    <property type="entry name" value="SecA"/>
</dbReference>
<dbReference type="InterPro" id="IPR020937">
    <property type="entry name" value="SecA_CS"/>
</dbReference>
<dbReference type="InterPro" id="IPR011115">
    <property type="entry name" value="SecA_DEAD"/>
</dbReference>
<dbReference type="InterPro" id="IPR014018">
    <property type="entry name" value="SecA_motor_DEAD"/>
</dbReference>
<dbReference type="InterPro" id="IPR011130">
    <property type="entry name" value="SecA_preprotein_X-link_dom"/>
</dbReference>
<dbReference type="InterPro" id="IPR044722">
    <property type="entry name" value="SecA_SF2_C"/>
</dbReference>
<dbReference type="InterPro" id="IPR011116">
    <property type="entry name" value="SecA_Wing/Scaffold"/>
</dbReference>
<dbReference type="InterPro" id="IPR036266">
    <property type="entry name" value="SecA_Wing/Scaffold_sf"/>
</dbReference>
<dbReference type="InterPro" id="IPR036670">
    <property type="entry name" value="SecA_X-link_sf"/>
</dbReference>
<dbReference type="NCBIfam" id="NF009538">
    <property type="entry name" value="PRK12904.1"/>
    <property type="match status" value="1"/>
</dbReference>
<dbReference type="NCBIfam" id="TIGR00963">
    <property type="entry name" value="secA"/>
    <property type="match status" value="1"/>
</dbReference>
<dbReference type="PANTHER" id="PTHR30612:SF0">
    <property type="entry name" value="CHLOROPLAST PROTEIN-TRANSPORTING ATPASE"/>
    <property type="match status" value="1"/>
</dbReference>
<dbReference type="PANTHER" id="PTHR30612">
    <property type="entry name" value="SECA INNER MEMBRANE COMPONENT OF SEC PROTEIN SECRETION SYSTEM"/>
    <property type="match status" value="1"/>
</dbReference>
<dbReference type="Pfam" id="PF21090">
    <property type="entry name" value="P-loop_SecA"/>
    <property type="match status" value="1"/>
</dbReference>
<dbReference type="Pfam" id="PF02810">
    <property type="entry name" value="SEC-C"/>
    <property type="match status" value="1"/>
</dbReference>
<dbReference type="Pfam" id="PF07517">
    <property type="entry name" value="SecA_DEAD"/>
    <property type="match status" value="1"/>
</dbReference>
<dbReference type="Pfam" id="PF01043">
    <property type="entry name" value="SecA_PP_bind"/>
    <property type="match status" value="1"/>
</dbReference>
<dbReference type="Pfam" id="PF07516">
    <property type="entry name" value="SecA_SW"/>
    <property type="match status" value="1"/>
</dbReference>
<dbReference type="PRINTS" id="PR00906">
    <property type="entry name" value="SECA"/>
</dbReference>
<dbReference type="SMART" id="SM00957">
    <property type="entry name" value="SecA_DEAD"/>
    <property type="match status" value="1"/>
</dbReference>
<dbReference type="SMART" id="SM00958">
    <property type="entry name" value="SecA_PP_bind"/>
    <property type="match status" value="1"/>
</dbReference>
<dbReference type="SUPFAM" id="SSF81886">
    <property type="entry name" value="Helical scaffold and wing domains of SecA"/>
    <property type="match status" value="1"/>
</dbReference>
<dbReference type="SUPFAM" id="SSF52540">
    <property type="entry name" value="P-loop containing nucleoside triphosphate hydrolases"/>
    <property type="match status" value="2"/>
</dbReference>
<dbReference type="SUPFAM" id="SSF81767">
    <property type="entry name" value="Pre-protein crosslinking domain of SecA"/>
    <property type="match status" value="1"/>
</dbReference>
<dbReference type="PROSITE" id="PS01312">
    <property type="entry name" value="SECA"/>
    <property type="match status" value="1"/>
</dbReference>
<dbReference type="PROSITE" id="PS51196">
    <property type="entry name" value="SECA_MOTOR_DEAD"/>
    <property type="match status" value="1"/>
</dbReference>
<sequence length="902" mass="102478">MFSSILRKVFGSRNDRLLKKLRKNVDAINALEAEFEKLSDEALKAKTDEFKARIEKGEALDNILVEAFATVREASKRVYGMRHFDVQMLGGQVLHEGKISEMRTGEGKTLTATLPTYLNALSGKGVHVVTVNDYLARRDAEWSNQLFTFLGMRVGCNIPGMSPEQKRDAYQADVTYGTNNEFGFDYLRDNMAFSPQDRVQRPLNYAVVDEVDSILIDEARTPLIISGQAEDSSELYRRINTIIPKLVQQEKEDEEGQEGDGDYTIDLKAKQIHLTERGQLHVEEILHEESLLPEGESLFAAGNISLLHHINAALRAHKLFSKDVDYIVKEDQIVIVDEHTGRTMEGRRWSEGLHQAVEAKEGVRIQNENQTLASITFQNYFRLYNKLAGMTGTADTEAFEFNHIYGLETVVIPTNRPMQRKDMPDLIYLTAEEKYEAIVEDIKACVKRGQPTLVGTVSIENSELISRILKKSKIPHKVLNAKFHEHEADIVAQAGKPGAVTIATNMAGRGTDIVLGGNWQAELEKIENPTESQIEKVKAAWKESHDAVLAAGGLHIIGTERHESRRIDNQLRGRSGRQGDPGSSRFYLSLDDALMRIFASEKMGNMMKRLGMERGEAIEHPWVTRAIENAQRKVEGRNFDIRKQLLEYDDVANDQRKVIYEQRNELLDEGDISETIAVIREDVVSSVVDEYIPPQSLEEMWDVSGLEERMRADFAVDLPIKTWLENDDKLYEEKLRERILNEVVDAYKQKEAVVGEQVLRQFEKAVMLQNLDSHWKEHLAAMDHLRQGIHLRGYAQKNPKQEYKRESFALFSEMLEALKVEVITILARVKVQAEEDVQKVEEQRRQADDVPKNFEHEDATAAPEEASDQVRTQVREGAKVGRNDPCPCGSGKKYKQCHGKLK</sequence>
<reference key="1">
    <citation type="journal article" date="2008" name="ISME J.">
        <title>Comparative genomics of two ecotypes of the marine planktonic copiotroph Alteromonas macleodii suggests alternative lifestyles associated with different kinds of particulate organic matter.</title>
        <authorList>
            <person name="Ivars-Martinez E."/>
            <person name="Martin-Cuadrado A.-B."/>
            <person name="D'Auria G."/>
            <person name="Mira A."/>
            <person name="Ferriera S."/>
            <person name="Johnson J."/>
            <person name="Friedman R."/>
            <person name="Rodriguez-Valera F."/>
        </authorList>
    </citation>
    <scope>NUCLEOTIDE SEQUENCE [LARGE SCALE GENOMIC DNA]</scope>
    <source>
        <strain>DSM 17117 / CIP 110805 / LMG 28347 / Deep ecotype</strain>
    </source>
</reference>
<keyword id="KW-0067">ATP-binding</keyword>
<keyword id="KW-0997">Cell inner membrane</keyword>
<keyword id="KW-1003">Cell membrane</keyword>
<keyword id="KW-0963">Cytoplasm</keyword>
<keyword id="KW-0472">Membrane</keyword>
<keyword id="KW-0479">Metal-binding</keyword>
<keyword id="KW-0547">Nucleotide-binding</keyword>
<keyword id="KW-0653">Protein transport</keyword>
<keyword id="KW-1278">Translocase</keyword>
<keyword id="KW-0811">Translocation</keyword>
<keyword id="KW-0813">Transport</keyword>
<keyword id="KW-0862">Zinc</keyword>
<accession>B4RWX1</accession>
<accession>F2GD09</accession>
<gene>
    <name evidence="1" type="primary">secA</name>
    <name type="ordered locus">MADE_1015110</name>
</gene>